<feature type="initiator methionine" description="Removed" evidence="1">
    <location>
        <position position="1"/>
    </location>
</feature>
<feature type="chain" id="PRO_0000258153" description="Large ribosomal subunit protein uL11">
    <location>
        <begin position="2"/>
        <end position="142"/>
    </location>
</feature>
<gene>
    <name evidence="2" type="primary">rplK</name>
    <name type="ordered locus">ECP_4196</name>
</gene>
<protein>
    <recommendedName>
        <fullName evidence="2">Large ribosomal subunit protein uL11</fullName>
    </recommendedName>
    <alternativeName>
        <fullName evidence="3">50S ribosomal protein L11</fullName>
    </alternativeName>
</protein>
<evidence type="ECO:0000250" key="1"/>
<evidence type="ECO:0000255" key="2">
    <source>
        <dbReference type="HAMAP-Rule" id="MF_00736"/>
    </source>
</evidence>
<evidence type="ECO:0000305" key="3"/>
<comment type="function">
    <text evidence="2">Forms part of the ribosomal stalk which helps the ribosome interact with GTP-bound translation factors.</text>
</comment>
<comment type="subunit">
    <text evidence="2">Part of the ribosomal stalk of the 50S ribosomal subunit. Interacts with L10 and the large rRNA to form the base of the stalk. L10 forms an elongated spine to which L12 dimers bind in a sequential fashion forming a multimeric L10(L12)X complex.</text>
</comment>
<comment type="PTM">
    <text evidence="2">One or more lysine residues are methylated.</text>
</comment>
<comment type="similarity">
    <text evidence="2">Belongs to the universal ribosomal protein uL11 family.</text>
</comment>
<sequence length="142" mass="14875">MAKKVQAYVKLQVAAGMANPSPPVGPALGQQGVNIMEFCKAFNAKTDSIEKGLPIPVVITVYADRSFTFVTKTPPAAVLLKKAAGIKSGSGKPNKDKVGKISRAQLQEIAQTKAADMTGADIEAMTRSIEGTARSMGLVVED</sequence>
<name>RL11_ECOL5</name>
<accession>Q0TA82</accession>
<dbReference type="EMBL" id="CP000247">
    <property type="protein sequence ID" value="ABG72147.1"/>
    <property type="molecule type" value="Genomic_DNA"/>
</dbReference>
<dbReference type="RefSeq" id="WP_001085926.1">
    <property type="nucleotide sequence ID" value="NC_008253.1"/>
</dbReference>
<dbReference type="SMR" id="Q0TA82"/>
<dbReference type="GeneID" id="93777911"/>
<dbReference type="KEGG" id="ecp:ECP_4196"/>
<dbReference type="HOGENOM" id="CLU_074237_2_0_6"/>
<dbReference type="Proteomes" id="UP000009182">
    <property type="component" value="Chromosome"/>
</dbReference>
<dbReference type="GO" id="GO:0022625">
    <property type="term" value="C:cytosolic large ribosomal subunit"/>
    <property type="evidence" value="ECO:0007669"/>
    <property type="project" value="TreeGrafter"/>
</dbReference>
<dbReference type="GO" id="GO:0070180">
    <property type="term" value="F:large ribosomal subunit rRNA binding"/>
    <property type="evidence" value="ECO:0007669"/>
    <property type="project" value="UniProtKB-UniRule"/>
</dbReference>
<dbReference type="GO" id="GO:0003735">
    <property type="term" value="F:structural constituent of ribosome"/>
    <property type="evidence" value="ECO:0007669"/>
    <property type="project" value="InterPro"/>
</dbReference>
<dbReference type="GO" id="GO:0006412">
    <property type="term" value="P:translation"/>
    <property type="evidence" value="ECO:0007669"/>
    <property type="project" value="UniProtKB-UniRule"/>
</dbReference>
<dbReference type="CDD" id="cd00349">
    <property type="entry name" value="Ribosomal_L11"/>
    <property type="match status" value="1"/>
</dbReference>
<dbReference type="FunFam" id="1.10.10.250:FF:000001">
    <property type="entry name" value="50S ribosomal protein L11"/>
    <property type="match status" value="1"/>
</dbReference>
<dbReference type="FunFam" id="3.30.1550.10:FF:000001">
    <property type="entry name" value="50S ribosomal protein L11"/>
    <property type="match status" value="1"/>
</dbReference>
<dbReference type="Gene3D" id="1.10.10.250">
    <property type="entry name" value="Ribosomal protein L11, C-terminal domain"/>
    <property type="match status" value="1"/>
</dbReference>
<dbReference type="Gene3D" id="3.30.1550.10">
    <property type="entry name" value="Ribosomal protein L11/L12, N-terminal domain"/>
    <property type="match status" value="1"/>
</dbReference>
<dbReference type="HAMAP" id="MF_00736">
    <property type="entry name" value="Ribosomal_uL11"/>
    <property type="match status" value="1"/>
</dbReference>
<dbReference type="InterPro" id="IPR000911">
    <property type="entry name" value="Ribosomal_uL11"/>
</dbReference>
<dbReference type="InterPro" id="IPR006519">
    <property type="entry name" value="Ribosomal_uL11_bac-typ"/>
</dbReference>
<dbReference type="InterPro" id="IPR020783">
    <property type="entry name" value="Ribosomal_uL11_C"/>
</dbReference>
<dbReference type="InterPro" id="IPR036769">
    <property type="entry name" value="Ribosomal_uL11_C_sf"/>
</dbReference>
<dbReference type="InterPro" id="IPR020785">
    <property type="entry name" value="Ribosomal_uL11_CS"/>
</dbReference>
<dbReference type="InterPro" id="IPR020784">
    <property type="entry name" value="Ribosomal_uL11_N"/>
</dbReference>
<dbReference type="InterPro" id="IPR036796">
    <property type="entry name" value="Ribosomal_uL11_N_sf"/>
</dbReference>
<dbReference type="NCBIfam" id="TIGR01632">
    <property type="entry name" value="L11_bact"/>
    <property type="match status" value="1"/>
</dbReference>
<dbReference type="PANTHER" id="PTHR11661">
    <property type="entry name" value="60S RIBOSOMAL PROTEIN L12"/>
    <property type="match status" value="1"/>
</dbReference>
<dbReference type="PANTHER" id="PTHR11661:SF1">
    <property type="entry name" value="LARGE RIBOSOMAL SUBUNIT PROTEIN UL11M"/>
    <property type="match status" value="1"/>
</dbReference>
<dbReference type="Pfam" id="PF00298">
    <property type="entry name" value="Ribosomal_L11"/>
    <property type="match status" value="1"/>
</dbReference>
<dbReference type="Pfam" id="PF03946">
    <property type="entry name" value="Ribosomal_L11_N"/>
    <property type="match status" value="1"/>
</dbReference>
<dbReference type="SMART" id="SM00649">
    <property type="entry name" value="RL11"/>
    <property type="match status" value="1"/>
</dbReference>
<dbReference type="SUPFAM" id="SSF54747">
    <property type="entry name" value="Ribosomal L11/L12e N-terminal domain"/>
    <property type="match status" value="1"/>
</dbReference>
<dbReference type="SUPFAM" id="SSF46906">
    <property type="entry name" value="Ribosomal protein L11, C-terminal domain"/>
    <property type="match status" value="1"/>
</dbReference>
<dbReference type="PROSITE" id="PS00359">
    <property type="entry name" value="RIBOSOMAL_L11"/>
    <property type="match status" value="1"/>
</dbReference>
<organism>
    <name type="scientific">Escherichia coli O6:K15:H31 (strain 536 / UPEC)</name>
    <dbReference type="NCBI Taxonomy" id="362663"/>
    <lineage>
        <taxon>Bacteria</taxon>
        <taxon>Pseudomonadati</taxon>
        <taxon>Pseudomonadota</taxon>
        <taxon>Gammaproteobacteria</taxon>
        <taxon>Enterobacterales</taxon>
        <taxon>Enterobacteriaceae</taxon>
        <taxon>Escherichia</taxon>
    </lineage>
</organism>
<reference key="1">
    <citation type="journal article" date="2006" name="Mol. Microbiol.">
        <title>Role of pathogenicity island-associated integrases in the genome plasticity of uropathogenic Escherichia coli strain 536.</title>
        <authorList>
            <person name="Hochhut B."/>
            <person name="Wilde C."/>
            <person name="Balling G."/>
            <person name="Middendorf B."/>
            <person name="Dobrindt U."/>
            <person name="Brzuszkiewicz E."/>
            <person name="Gottschalk G."/>
            <person name="Carniel E."/>
            <person name="Hacker J."/>
        </authorList>
    </citation>
    <scope>NUCLEOTIDE SEQUENCE [LARGE SCALE GENOMIC DNA]</scope>
    <source>
        <strain>536 / UPEC</strain>
    </source>
</reference>
<proteinExistence type="inferred from homology"/>
<keyword id="KW-0488">Methylation</keyword>
<keyword id="KW-0687">Ribonucleoprotein</keyword>
<keyword id="KW-0689">Ribosomal protein</keyword>
<keyword id="KW-0694">RNA-binding</keyword>
<keyword id="KW-0699">rRNA-binding</keyword>